<sequence length="271" mass="27978">MSRIQNTFAALAAQGRKGLIPFITAGDPDPAKTVELMHALAEGGADVIELGVPFSDPMADGPVIQRSSERALAKGVTLHSVLDDVKRFRARDQKTPVVLMGYANPIERMGADAFAAAARDAGVDGVLVVDYPPEESHDFAAKMRAAGIDPIFLLAPTSTDDRIAAVGQVASGYVYYVSLKGVTGAANLDVSSIAGKIPAIKSRVPLPVGVGFGIRDAATARAVAEVADAVVIGSRLVQLLEQAAPERAAAELAGFVAELRVAIDGAAKPAA</sequence>
<protein>
    <recommendedName>
        <fullName evidence="1">Tryptophan synthase alpha chain</fullName>
        <ecNumber evidence="1">4.2.1.20</ecNumber>
    </recommendedName>
</protein>
<reference key="1">
    <citation type="journal article" date="2004" name="Proc. Natl. Acad. Sci. U.S.A.">
        <title>Genomic plasticity of the causative agent of melioidosis, Burkholderia pseudomallei.</title>
        <authorList>
            <person name="Holden M.T.G."/>
            <person name="Titball R.W."/>
            <person name="Peacock S.J."/>
            <person name="Cerdeno-Tarraga A.-M."/>
            <person name="Atkins T."/>
            <person name="Crossman L.C."/>
            <person name="Pitt T."/>
            <person name="Churcher C."/>
            <person name="Mungall K.L."/>
            <person name="Bentley S.D."/>
            <person name="Sebaihia M."/>
            <person name="Thomson N.R."/>
            <person name="Bason N."/>
            <person name="Beacham I.R."/>
            <person name="Brooks K."/>
            <person name="Brown K.A."/>
            <person name="Brown N.F."/>
            <person name="Challis G.L."/>
            <person name="Cherevach I."/>
            <person name="Chillingworth T."/>
            <person name="Cronin A."/>
            <person name="Crossett B."/>
            <person name="Davis P."/>
            <person name="DeShazer D."/>
            <person name="Feltwell T."/>
            <person name="Fraser A."/>
            <person name="Hance Z."/>
            <person name="Hauser H."/>
            <person name="Holroyd S."/>
            <person name="Jagels K."/>
            <person name="Keith K.E."/>
            <person name="Maddison M."/>
            <person name="Moule S."/>
            <person name="Price C."/>
            <person name="Quail M.A."/>
            <person name="Rabbinowitsch E."/>
            <person name="Rutherford K."/>
            <person name="Sanders M."/>
            <person name="Simmonds M."/>
            <person name="Songsivilai S."/>
            <person name="Stevens K."/>
            <person name="Tumapa S."/>
            <person name="Vesaratchavest M."/>
            <person name="Whitehead S."/>
            <person name="Yeats C."/>
            <person name="Barrell B.G."/>
            <person name="Oyston P.C.F."/>
            <person name="Parkhill J."/>
        </authorList>
    </citation>
    <scope>NUCLEOTIDE SEQUENCE [LARGE SCALE GENOMIC DNA]</scope>
    <source>
        <strain>K96243</strain>
    </source>
</reference>
<keyword id="KW-0028">Amino-acid biosynthesis</keyword>
<keyword id="KW-0057">Aromatic amino acid biosynthesis</keyword>
<keyword id="KW-0456">Lyase</keyword>
<keyword id="KW-1185">Reference proteome</keyword>
<keyword id="KW-0822">Tryptophan biosynthesis</keyword>
<feature type="chain" id="PRO_0000098761" description="Tryptophan synthase alpha chain">
    <location>
        <begin position="1"/>
        <end position="271"/>
    </location>
</feature>
<feature type="active site" description="Proton acceptor" evidence="1">
    <location>
        <position position="49"/>
    </location>
</feature>
<feature type="active site" description="Proton acceptor" evidence="1">
    <location>
        <position position="60"/>
    </location>
</feature>
<dbReference type="EC" id="4.2.1.20" evidence="1"/>
<dbReference type="EMBL" id="BX571966">
    <property type="protein sequence ID" value="CAH39170.1"/>
    <property type="molecule type" value="Genomic_DNA"/>
</dbReference>
<dbReference type="RefSeq" id="WP_004528976.1">
    <property type="nucleotide sequence ID" value="NZ_CP009537.1"/>
</dbReference>
<dbReference type="RefSeq" id="YP_111702.1">
    <property type="nucleotide sequence ID" value="NC_006351.1"/>
</dbReference>
<dbReference type="SMR" id="Q63JM0"/>
<dbReference type="STRING" id="272560.BPSS1697"/>
<dbReference type="KEGG" id="bps:BPSS1697"/>
<dbReference type="PATRIC" id="fig|272560.51.peg.5109"/>
<dbReference type="eggNOG" id="COG0159">
    <property type="taxonomic scope" value="Bacteria"/>
</dbReference>
<dbReference type="UniPathway" id="UPA00035">
    <property type="reaction ID" value="UER00044"/>
</dbReference>
<dbReference type="Proteomes" id="UP000000605">
    <property type="component" value="Chromosome 2"/>
</dbReference>
<dbReference type="GO" id="GO:0005829">
    <property type="term" value="C:cytosol"/>
    <property type="evidence" value="ECO:0007669"/>
    <property type="project" value="TreeGrafter"/>
</dbReference>
<dbReference type="GO" id="GO:0004834">
    <property type="term" value="F:tryptophan synthase activity"/>
    <property type="evidence" value="ECO:0007669"/>
    <property type="project" value="UniProtKB-UniRule"/>
</dbReference>
<dbReference type="CDD" id="cd04724">
    <property type="entry name" value="Tryptophan_synthase_alpha"/>
    <property type="match status" value="1"/>
</dbReference>
<dbReference type="FunFam" id="3.20.20.70:FF:000037">
    <property type="entry name" value="Tryptophan synthase alpha chain"/>
    <property type="match status" value="1"/>
</dbReference>
<dbReference type="Gene3D" id="3.20.20.70">
    <property type="entry name" value="Aldolase class I"/>
    <property type="match status" value="1"/>
</dbReference>
<dbReference type="HAMAP" id="MF_00131">
    <property type="entry name" value="Trp_synth_alpha"/>
    <property type="match status" value="1"/>
</dbReference>
<dbReference type="InterPro" id="IPR013785">
    <property type="entry name" value="Aldolase_TIM"/>
</dbReference>
<dbReference type="InterPro" id="IPR011060">
    <property type="entry name" value="RibuloseP-bd_barrel"/>
</dbReference>
<dbReference type="InterPro" id="IPR018204">
    <property type="entry name" value="Trp_synthase_alpha_AS"/>
</dbReference>
<dbReference type="InterPro" id="IPR002028">
    <property type="entry name" value="Trp_synthase_suA"/>
</dbReference>
<dbReference type="NCBIfam" id="TIGR00262">
    <property type="entry name" value="trpA"/>
    <property type="match status" value="1"/>
</dbReference>
<dbReference type="PANTHER" id="PTHR43406:SF1">
    <property type="entry name" value="TRYPTOPHAN SYNTHASE ALPHA CHAIN, CHLOROPLASTIC"/>
    <property type="match status" value="1"/>
</dbReference>
<dbReference type="PANTHER" id="PTHR43406">
    <property type="entry name" value="TRYPTOPHAN SYNTHASE, ALPHA CHAIN"/>
    <property type="match status" value="1"/>
</dbReference>
<dbReference type="Pfam" id="PF00290">
    <property type="entry name" value="Trp_syntA"/>
    <property type="match status" value="1"/>
</dbReference>
<dbReference type="SUPFAM" id="SSF51366">
    <property type="entry name" value="Ribulose-phoshate binding barrel"/>
    <property type="match status" value="1"/>
</dbReference>
<dbReference type="PROSITE" id="PS00167">
    <property type="entry name" value="TRP_SYNTHASE_ALPHA"/>
    <property type="match status" value="1"/>
</dbReference>
<organism>
    <name type="scientific">Burkholderia pseudomallei (strain K96243)</name>
    <dbReference type="NCBI Taxonomy" id="272560"/>
    <lineage>
        <taxon>Bacteria</taxon>
        <taxon>Pseudomonadati</taxon>
        <taxon>Pseudomonadota</taxon>
        <taxon>Betaproteobacteria</taxon>
        <taxon>Burkholderiales</taxon>
        <taxon>Burkholderiaceae</taxon>
        <taxon>Burkholderia</taxon>
        <taxon>pseudomallei group</taxon>
    </lineage>
</organism>
<gene>
    <name evidence="1" type="primary">trpA</name>
    <name type="ordered locus">BPSS1697</name>
</gene>
<proteinExistence type="inferred from homology"/>
<accession>Q63JM0</accession>
<comment type="function">
    <text evidence="1">The alpha subunit is responsible for the aldol cleavage of indoleglycerol phosphate to indole and glyceraldehyde 3-phosphate.</text>
</comment>
<comment type="catalytic activity">
    <reaction evidence="1">
        <text>(1S,2R)-1-C-(indol-3-yl)glycerol 3-phosphate + L-serine = D-glyceraldehyde 3-phosphate + L-tryptophan + H2O</text>
        <dbReference type="Rhea" id="RHEA:10532"/>
        <dbReference type="ChEBI" id="CHEBI:15377"/>
        <dbReference type="ChEBI" id="CHEBI:33384"/>
        <dbReference type="ChEBI" id="CHEBI:57912"/>
        <dbReference type="ChEBI" id="CHEBI:58866"/>
        <dbReference type="ChEBI" id="CHEBI:59776"/>
        <dbReference type="EC" id="4.2.1.20"/>
    </reaction>
</comment>
<comment type="pathway">
    <text evidence="1">Amino-acid biosynthesis; L-tryptophan biosynthesis; L-tryptophan from chorismate: step 5/5.</text>
</comment>
<comment type="subunit">
    <text evidence="1">Tetramer of two alpha and two beta chains.</text>
</comment>
<comment type="similarity">
    <text evidence="1">Belongs to the TrpA family.</text>
</comment>
<name>TRPA_BURPS</name>
<evidence type="ECO:0000255" key="1">
    <source>
        <dbReference type="HAMAP-Rule" id="MF_00131"/>
    </source>
</evidence>